<reference key="1">
    <citation type="journal article" date="1989" name="J. Biol. Chem.">
        <title>The mouse porphobilinogen deaminase gene. Structural organization, sequence, and transcriptional analysis.</title>
        <authorList>
            <person name="Beaumont C."/>
            <person name="Porcher C."/>
            <person name="Picat C."/>
            <person name="Nordmann Y."/>
            <person name="Grandchamp B."/>
        </authorList>
    </citation>
    <scope>NUCLEOTIDE SEQUENCE [GENOMIC DNA] (ISOFORMS 1 AND 2)</scope>
</reference>
<reference key="2">
    <citation type="journal article" date="2005" name="Science">
        <title>The transcriptional landscape of the mammalian genome.</title>
        <authorList>
            <person name="Carninci P."/>
            <person name="Kasukawa T."/>
            <person name="Katayama S."/>
            <person name="Gough J."/>
            <person name="Frith M.C."/>
            <person name="Maeda N."/>
            <person name="Oyama R."/>
            <person name="Ravasi T."/>
            <person name="Lenhard B."/>
            <person name="Wells C."/>
            <person name="Kodzius R."/>
            <person name="Shimokawa K."/>
            <person name="Bajic V.B."/>
            <person name="Brenner S.E."/>
            <person name="Batalov S."/>
            <person name="Forrest A.R."/>
            <person name="Zavolan M."/>
            <person name="Davis M.J."/>
            <person name="Wilming L.G."/>
            <person name="Aidinis V."/>
            <person name="Allen J.E."/>
            <person name="Ambesi-Impiombato A."/>
            <person name="Apweiler R."/>
            <person name="Aturaliya R.N."/>
            <person name="Bailey T.L."/>
            <person name="Bansal M."/>
            <person name="Baxter L."/>
            <person name="Beisel K.W."/>
            <person name="Bersano T."/>
            <person name="Bono H."/>
            <person name="Chalk A.M."/>
            <person name="Chiu K.P."/>
            <person name="Choudhary V."/>
            <person name="Christoffels A."/>
            <person name="Clutterbuck D.R."/>
            <person name="Crowe M.L."/>
            <person name="Dalla E."/>
            <person name="Dalrymple B.P."/>
            <person name="de Bono B."/>
            <person name="Della Gatta G."/>
            <person name="di Bernardo D."/>
            <person name="Down T."/>
            <person name="Engstrom P."/>
            <person name="Fagiolini M."/>
            <person name="Faulkner G."/>
            <person name="Fletcher C.F."/>
            <person name="Fukushima T."/>
            <person name="Furuno M."/>
            <person name="Futaki S."/>
            <person name="Gariboldi M."/>
            <person name="Georgii-Hemming P."/>
            <person name="Gingeras T.R."/>
            <person name="Gojobori T."/>
            <person name="Green R.E."/>
            <person name="Gustincich S."/>
            <person name="Harbers M."/>
            <person name="Hayashi Y."/>
            <person name="Hensch T.K."/>
            <person name="Hirokawa N."/>
            <person name="Hill D."/>
            <person name="Huminiecki L."/>
            <person name="Iacono M."/>
            <person name="Ikeo K."/>
            <person name="Iwama A."/>
            <person name="Ishikawa T."/>
            <person name="Jakt M."/>
            <person name="Kanapin A."/>
            <person name="Katoh M."/>
            <person name="Kawasawa Y."/>
            <person name="Kelso J."/>
            <person name="Kitamura H."/>
            <person name="Kitano H."/>
            <person name="Kollias G."/>
            <person name="Krishnan S.P."/>
            <person name="Kruger A."/>
            <person name="Kummerfeld S.K."/>
            <person name="Kurochkin I.V."/>
            <person name="Lareau L.F."/>
            <person name="Lazarevic D."/>
            <person name="Lipovich L."/>
            <person name="Liu J."/>
            <person name="Liuni S."/>
            <person name="McWilliam S."/>
            <person name="Madan Babu M."/>
            <person name="Madera M."/>
            <person name="Marchionni L."/>
            <person name="Matsuda H."/>
            <person name="Matsuzawa S."/>
            <person name="Miki H."/>
            <person name="Mignone F."/>
            <person name="Miyake S."/>
            <person name="Morris K."/>
            <person name="Mottagui-Tabar S."/>
            <person name="Mulder N."/>
            <person name="Nakano N."/>
            <person name="Nakauchi H."/>
            <person name="Ng P."/>
            <person name="Nilsson R."/>
            <person name="Nishiguchi S."/>
            <person name="Nishikawa S."/>
            <person name="Nori F."/>
            <person name="Ohara O."/>
            <person name="Okazaki Y."/>
            <person name="Orlando V."/>
            <person name="Pang K.C."/>
            <person name="Pavan W.J."/>
            <person name="Pavesi G."/>
            <person name="Pesole G."/>
            <person name="Petrovsky N."/>
            <person name="Piazza S."/>
            <person name="Reed J."/>
            <person name="Reid J.F."/>
            <person name="Ring B.Z."/>
            <person name="Ringwald M."/>
            <person name="Rost B."/>
            <person name="Ruan Y."/>
            <person name="Salzberg S.L."/>
            <person name="Sandelin A."/>
            <person name="Schneider C."/>
            <person name="Schoenbach C."/>
            <person name="Sekiguchi K."/>
            <person name="Semple C.A."/>
            <person name="Seno S."/>
            <person name="Sessa L."/>
            <person name="Sheng Y."/>
            <person name="Shibata Y."/>
            <person name="Shimada H."/>
            <person name="Shimada K."/>
            <person name="Silva D."/>
            <person name="Sinclair B."/>
            <person name="Sperling S."/>
            <person name="Stupka E."/>
            <person name="Sugiura K."/>
            <person name="Sultana R."/>
            <person name="Takenaka Y."/>
            <person name="Taki K."/>
            <person name="Tammoja K."/>
            <person name="Tan S.L."/>
            <person name="Tang S."/>
            <person name="Taylor M.S."/>
            <person name="Tegner J."/>
            <person name="Teichmann S.A."/>
            <person name="Ueda H.R."/>
            <person name="van Nimwegen E."/>
            <person name="Verardo R."/>
            <person name="Wei C.L."/>
            <person name="Yagi K."/>
            <person name="Yamanishi H."/>
            <person name="Zabarovsky E."/>
            <person name="Zhu S."/>
            <person name="Zimmer A."/>
            <person name="Hide W."/>
            <person name="Bult C."/>
            <person name="Grimmond S.M."/>
            <person name="Teasdale R.D."/>
            <person name="Liu E.T."/>
            <person name="Brusic V."/>
            <person name="Quackenbush J."/>
            <person name="Wahlestedt C."/>
            <person name="Mattick J.S."/>
            <person name="Hume D.A."/>
            <person name="Kai C."/>
            <person name="Sasaki D."/>
            <person name="Tomaru Y."/>
            <person name="Fukuda S."/>
            <person name="Kanamori-Katayama M."/>
            <person name="Suzuki M."/>
            <person name="Aoki J."/>
            <person name="Arakawa T."/>
            <person name="Iida J."/>
            <person name="Imamura K."/>
            <person name="Itoh M."/>
            <person name="Kato T."/>
            <person name="Kawaji H."/>
            <person name="Kawagashira N."/>
            <person name="Kawashima T."/>
            <person name="Kojima M."/>
            <person name="Kondo S."/>
            <person name="Konno H."/>
            <person name="Nakano K."/>
            <person name="Ninomiya N."/>
            <person name="Nishio T."/>
            <person name="Okada M."/>
            <person name="Plessy C."/>
            <person name="Shibata K."/>
            <person name="Shiraki T."/>
            <person name="Suzuki S."/>
            <person name="Tagami M."/>
            <person name="Waki K."/>
            <person name="Watahiki A."/>
            <person name="Okamura-Oho Y."/>
            <person name="Suzuki H."/>
            <person name="Kawai J."/>
            <person name="Hayashizaki Y."/>
        </authorList>
    </citation>
    <scope>NUCLEOTIDE SEQUENCE [LARGE SCALE MRNA] (ISOFORM 1)</scope>
    <source>
        <strain>C57BL/6J</strain>
        <tissue>Amnion</tissue>
    </source>
</reference>
<reference key="3">
    <citation type="journal article" date="1996" name="Nat. Genet.">
        <title>Porphobilinogen deaminase deficiency in mice causes a neuropathy resembling that of human hepatic porphyria.</title>
        <authorList>
            <person name="Lindberg R.L."/>
            <person name="Porcher C."/>
            <person name="Grandchamp B."/>
            <person name="Ledermann B."/>
            <person name="Buerki K."/>
            <person name="Brandner S."/>
            <person name="Aguzzi A."/>
            <person name="Meyer U.A."/>
        </authorList>
    </citation>
    <scope>FUNCTION</scope>
    <scope>SUBCELLULAR LOCATION</scope>
    <scope>DISRUPTION PHENOTYPE</scope>
</reference>
<reference key="4">
    <citation type="journal article" date="2010" name="Cell">
        <title>A tissue-specific atlas of mouse protein phosphorylation and expression.</title>
        <authorList>
            <person name="Huttlin E.L."/>
            <person name="Jedrychowski M.P."/>
            <person name="Elias J.E."/>
            <person name="Goswami T."/>
            <person name="Rad R."/>
            <person name="Beausoleil S.A."/>
            <person name="Villen J."/>
            <person name="Haas W."/>
            <person name="Sowa M.E."/>
            <person name="Gygi S.P."/>
        </authorList>
    </citation>
    <scope>IDENTIFICATION BY MASS SPECTROMETRY [LARGE SCALE ANALYSIS]</scope>
    <source>
        <tissue>Brown adipose tissue</tissue>
        <tissue>Heart</tissue>
        <tissue>Kidney</tissue>
        <tissue>Liver</tissue>
        <tissue>Lung</tissue>
        <tissue>Pancreas</tissue>
        <tissue>Spleen</tissue>
        <tissue>Testis</tissue>
    </source>
</reference>
<reference key="5">
    <citation type="journal article" date="2013" name="Mol. Cell">
        <title>SIRT5-mediated lysine desuccinylation impacts diverse metabolic pathways.</title>
        <authorList>
            <person name="Park J."/>
            <person name="Chen Y."/>
            <person name="Tishkoff D.X."/>
            <person name="Peng C."/>
            <person name="Tan M."/>
            <person name="Dai L."/>
            <person name="Xie Z."/>
            <person name="Zhang Y."/>
            <person name="Zwaans B.M."/>
            <person name="Skinner M.E."/>
            <person name="Lombard D.B."/>
            <person name="Zhao Y."/>
        </authorList>
    </citation>
    <scope>ACETYLATION [LARGE SCALE ANALYSIS] AT LYS-74</scope>
    <scope>IDENTIFICATION BY MASS SPECTROMETRY [LARGE SCALE ANALYSIS]</scope>
    <source>
        <tissue>Embryonic fibroblast</tissue>
    </source>
</reference>
<sequence length="361" mass="39344">MSGNGGAATTAEENGSKMRVIRVGTRKSQLARIQTDTVVAMLKALYPGIQFEIIAMSTTGDKILDTALSKIGEKSLFTKELENALEKNEVDLVVHSLKDVPTILPPGFTIGAICKRENPCDAVVFHPKFIGKTLETLPEKSAVGTSSLRRVAQLQRKFPHLEFKSIRGNLNTRLRKLDELQEFSAIVLAVAGLQRMGWQNRVGQILHPEECMYAVGQGALAVEVRAKDQDILDLVSVLHDPETLLRCIAERAFLRHLEGGCSVPVAVHTVMKDGQLYLTGGVWSLDGSDSMQETMQATIQVPVQQEDGPEDDPQLVGITARNIPRGAQLAAENLGISLASLLLNKGAKNILDVARQLNDVR</sequence>
<name>HEM3_MOUSE</name>
<dbReference type="EC" id="2.5.1.61" evidence="1"/>
<dbReference type="EMBL" id="M28666">
    <property type="protein sequence ID" value="AAA39890.1"/>
    <property type="status" value="ALT_SEQ"/>
    <property type="molecule type" value="Genomic_DNA"/>
</dbReference>
<dbReference type="EMBL" id="M28663">
    <property type="protein sequence ID" value="AAA39890.1"/>
    <property type="status" value="JOINED"/>
    <property type="molecule type" value="Genomic_DNA"/>
</dbReference>
<dbReference type="EMBL" id="M28664">
    <property type="protein sequence ID" value="AAA39890.1"/>
    <property type="status" value="JOINED"/>
    <property type="molecule type" value="Genomic_DNA"/>
</dbReference>
<dbReference type="EMBL" id="M28665">
    <property type="protein sequence ID" value="AAA39890.1"/>
    <property type="status" value="JOINED"/>
    <property type="molecule type" value="Genomic_DNA"/>
</dbReference>
<dbReference type="EMBL" id="M28666">
    <property type="protein sequence ID" value="AAA39891.1"/>
    <property type="molecule type" value="Genomic_DNA"/>
</dbReference>
<dbReference type="EMBL" id="M28663">
    <property type="protein sequence ID" value="AAA39891.1"/>
    <property type="status" value="JOINED"/>
    <property type="molecule type" value="Genomic_DNA"/>
</dbReference>
<dbReference type="EMBL" id="M28664">
    <property type="protein sequence ID" value="AAA39891.1"/>
    <property type="status" value="JOINED"/>
    <property type="molecule type" value="Genomic_DNA"/>
</dbReference>
<dbReference type="EMBL" id="M28665">
    <property type="protein sequence ID" value="AAA39891.1"/>
    <property type="status" value="JOINED"/>
    <property type="molecule type" value="Genomic_DNA"/>
</dbReference>
<dbReference type="EMBL" id="AK166734">
    <property type="protein sequence ID" value="BAE38979.1"/>
    <property type="molecule type" value="mRNA"/>
</dbReference>
<dbReference type="EMBL" id="AK167702">
    <property type="protein sequence ID" value="BAE39746.1"/>
    <property type="molecule type" value="mRNA"/>
</dbReference>
<dbReference type="CCDS" id="CCDS23106.1">
    <molecule id="P22907-1"/>
</dbReference>
<dbReference type="CCDS" id="CCDS52779.1">
    <molecule id="P22907-2"/>
</dbReference>
<dbReference type="PIR" id="A36513">
    <property type="entry name" value="IBMSN"/>
</dbReference>
<dbReference type="RefSeq" id="NP_001103721.1">
    <molecule id="P22907-2"/>
    <property type="nucleotide sequence ID" value="NM_001110251.1"/>
</dbReference>
<dbReference type="RefSeq" id="NP_038579.2">
    <molecule id="P22907-1"/>
    <property type="nucleotide sequence ID" value="NM_013551.2"/>
</dbReference>
<dbReference type="SMR" id="P22907"/>
<dbReference type="BioGRID" id="200321">
    <property type="interactions" value="4"/>
</dbReference>
<dbReference type="FunCoup" id="P22907">
    <property type="interactions" value="1577"/>
</dbReference>
<dbReference type="IntAct" id="P22907">
    <property type="interactions" value="2"/>
</dbReference>
<dbReference type="STRING" id="10090.ENSMUSP00000076575"/>
<dbReference type="iPTMnet" id="P22907"/>
<dbReference type="PhosphoSitePlus" id="P22907"/>
<dbReference type="SwissPalm" id="P22907"/>
<dbReference type="jPOST" id="P22907"/>
<dbReference type="PaxDb" id="10090-ENSMUSP00000076575"/>
<dbReference type="PeptideAtlas" id="P22907"/>
<dbReference type="ProteomicsDB" id="269587">
    <molecule id="P22907-1"/>
</dbReference>
<dbReference type="ProteomicsDB" id="269588">
    <molecule id="P22907-2"/>
</dbReference>
<dbReference type="Pumba" id="P22907"/>
<dbReference type="Antibodypedia" id="54687">
    <property type="antibodies" value="425 antibodies from 35 providers"/>
</dbReference>
<dbReference type="DNASU" id="15288"/>
<dbReference type="Ensembl" id="ENSMUST00000077353.15">
    <molecule id="P22907-1"/>
    <property type="protein sequence ID" value="ENSMUSP00000076575.8"/>
    <property type="gene ID" value="ENSMUSG00000032126.17"/>
</dbReference>
<dbReference type="Ensembl" id="ENSMUST00000097558.5">
    <molecule id="P22907-2"/>
    <property type="protein sequence ID" value="ENSMUSP00000095166.4"/>
    <property type="gene ID" value="ENSMUSG00000032126.17"/>
</dbReference>
<dbReference type="GeneID" id="15288"/>
<dbReference type="KEGG" id="mmu:15288"/>
<dbReference type="UCSC" id="uc009pcz.2">
    <molecule id="P22907-1"/>
    <property type="organism name" value="mouse"/>
</dbReference>
<dbReference type="AGR" id="MGI:96112"/>
<dbReference type="CTD" id="3145"/>
<dbReference type="MGI" id="MGI:96112">
    <property type="gene designation" value="Hmbs"/>
</dbReference>
<dbReference type="VEuPathDB" id="HostDB:ENSMUSG00000032126"/>
<dbReference type="eggNOG" id="KOG2892">
    <property type="taxonomic scope" value="Eukaryota"/>
</dbReference>
<dbReference type="GeneTree" id="ENSGT00390000009083"/>
<dbReference type="HOGENOM" id="CLU_019704_0_1_1"/>
<dbReference type="InParanoid" id="P22907"/>
<dbReference type="OMA" id="LWQANHI"/>
<dbReference type="OrthoDB" id="564646at2759"/>
<dbReference type="PhylomeDB" id="P22907"/>
<dbReference type="TreeFam" id="TF105389"/>
<dbReference type="BRENDA" id="2.5.1.61">
    <property type="organism ID" value="3474"/>
</dbReference>
<dbReference type="Reactome" id="R-MMU-189451">
    <property type="pathway name" value="Heme biosynthesis"/>
</dbReference>
<dbReference type="UniPathway" id="UPA00251">
    <property type="reaction ID" value="UER00319"/>
</dbReference>
<dbReference type="BioGRID-ORCS" id="15288">
    <property type="hits" value="10 hits in 82 CRISPR screens"/>
</dbReference>
<dbReference type="ChiTaRS" id="Hmbs">
    <property type="organism name" value="mouse"/>
</dbReference>
<dbReference type="PRO" id="PR:P22907"/>
<dbReference type="Proteomes" id="UP000000589">
    <property type="component" value="Chromosome 9"/>
</dbReference>
<dbReference type="RNAct" id="P22907">
    <property type="molecule type" value="protein"/>
</dbReference>
<dbReference type="Bgee" id="ENSMUSG00000032126">
    <property type="expression patterns" value="Expressed in fetal liver hematopoietic progenitor cell and 248 other cell types or tissues"/>
</dbReference>
<dbReference type="ExpressionAtlas" id="P22907">
    <property type="expression patterns" value="baseline and differential"/>
</dbReference>
<dbReference type="GO" id="GO:0005829">
    <property type="term" value="C:cytosol"/>
    <property type="evidence" value="ECO:0000314"/>
    <property type="project" value="MGI"/>
</dbReference>
<dbReference type="GO" id="GO:0004418">
    <property type="term" value="F:hydroxymethylbilane synthase activity"/>
    <property type="evidence" value="ECO:0000314"/>
    <property type="project" value="MGI"/>
</dbReference>
<dbReference type="GO" id="GO:0006784">
    <property type="term" value="P:heme A biosynthetic process"/>
    <property type="evidence" value="ECO:0000315"/>
    <property type="project" value="MGI"/>
</dbReference>
<dbReference type="GO" id="GO:0006785">
    <property type="term" value="P:heme B biosynthetic process"/>
    <property type="evidence" value="ECO:0000315"/>
    <property type="project" value="MGI"/>
</dbReference>
<dbReference type="GO" id="GO:0048034">
    <property type="term" value="P:heme O biosynthetic process"/>
    <property type="evidence" value="ECO:0000315"/>
    <property type="project" value="MGI"/>
</dbReference>
<dbReference type="GO" id="GO:0006782">
    <property type="term" value="P:protoporphyrinogen IX biosynthetic process"/>
    <property type="evidence" value="ECO:0007669"/>
    <property type="project" value="UniProtKB-UniPathway"/>
</dbReference>
<dbReference type="CDD" id="cd13645">
    <property type="entry name" value="PBP2_HuPBGD_like"/>
    <property type="match status" value="1"/>
</dbReference>
<dbReference type="FunFam" id="3.40.190.10:FF:000005">
    <property type="entry name" value="Porphobilinogen deaminase"/>
    <property type="match status" value="1"/>
</dbReference>
<dbReference type="FunFam" id="3.40.190.10:FF:000260">
    <property type="entry name" value="Porphobilinogen deaminase"/>
    <property type="match status" value="1"/>
</dbReference>
<dbReference type="FunFam" id="3.30.160.40:FF:000003">
    <property type="entry name" value="porphobilinogen deaminase isoform X1"/>
    <property type="match status" value="1"/>
</dbReference>
<dbReference type="Gene3D" id="3.40.190.10">
    <property type="entry name" value="Periplasmic binding protein-like II"/>
    <property type="match status" value="2"/>
</dbReference>
<dbReference type="Gene3D" id="3.30.160.40">
    <property type="entry name" value="Porphobilinogen deaminase, C-terminal domain"/>
    <property type="match status" value="1"/>
</dbReference>
<dbReference type="HAMAP" id="MF_00260">
    <property type="entry name" value="Porphobil_deam"/>
    <property type="match status" value="1"/>
</dbReference>
<dbReference type="InterPro" id="IPR000860">
    <property type="entry name" value="HemC"/>
</dbReference>
<dbReference type="InterPro" id="IPR022419">
    <property type="entry name" value="Porphobilin_deaminase_cofac_BS"/>
</dbReference>
<dbReference type="InterPro" id="IPR022417">
    <property type="entry name" value="Porphobilin_deaminase_N"/>
</dbReference>
<dbReference type="InterPro" id="IPR022418">
    <property type="entry name" value="Porphobilinogen_deaminase_C"/>
</dbReference>
<dbReference type="InterPro" id="IPR036803">
    <property type="entry name" value="Porphobilinogen_deaminase_C_sf"/>
</dbReference>
<dbReference type="NCBIfam" id="TIGR00212">
    <property type="entry name" value="hemC"/>
    <property type="match status" value="1"/>
</dbReference>
<dbReference type="PANTHER" id="PTHR11557">
    <property type="entry name" value="PORPHOBILINOGEN DEAMINASE"/>
    <property type="match status" value="1"/>
</dbReference>
<dbReference type="PANTHER" id="PTHR11557:SF0">
    <property type="entry name" value="PORPHOBILINOGEN DEAMINASE"/>
    <property type="match status" value="1"/>
</dbReference>
<dbReference type="Pfam" id="PF01379">
    <property type="entry name" value="Porphobil_deam"/>
    <property type="match status" value="1"/>
</dbReference>
<dbReference type="Pfam" id="PF03900">
    <property type="entry name" value="Porphobil_deamC"/>
    <property type="match status" value="1"/>
</dbReference>
<dbReference type="PIRSF" id="PIRSF001438">
    <property type="entry name" value="4pyrrol_synth_OHMeBilane_synth"/>
    <property type="match status" value="1"/>
</dbReference>
<dbReference type="PRINTS" id="PR00151">
    <property type="entry name" value="PORPHBDMNASE"/>
</dbReference>
<dbReference type="SUPFAM" id="SSF53850">
    <property type="entry name" value="Periplasmic binding protein-like II"/>
    <property type="match status" value="1"/>
</dbReference>
<dbReference type="SUPFAM" id="SSF54782">
    <property type="entry name" value="Porphobilinogen deaminase (hydroxymethylbilane synthase), C-terminal domain"/>
    <property type="match status" value="1"/>
</dbReference>
<dbReference type="PROSITE" id="PS00533">
    <property type="entry name" value="PORPHOBILINOGEN_DEAM"/>
    <property type="match status" value="1"/>
</dbReference>
<proteinExistence type="evidence at protein level"/>
<evidence type="ECO:0000250" key="1">
    <source>
        <dbReference type="UniProtKB" id="P08397"/>
    </source>
</evidence>
<evidence type="ECO:0000269" key="2">
    <source>
    </source>
</evidence>
<evidence type="ECO:0000305" key="3"/>
<evidence type="ECO:0007744" key="4">
    <source>
    </source>
</evidence>
<gene>
    <name type="primary">Hmbs</name>
    <name type="synonym">Uros1</name>
</gene>
<organism>
    <name type="scientific">Mus musculus</name>
    <name type="common">Mouse</name>
    <dbReference type="NCBI Taxonomy" id="10090"/>
    <lineage>
        <taxon>Eukaryota</taxon>
        <taxon>Metazoa</taxon>
        <taxon>Chordata</taxon>
        <taxon>Craniata</taxon>
        <taxon>Vertebrata</taxon>
        <taxon>Euteleostomi</taxon>
        <taxon>Mammalia</taxon>
        <taxon>Eutheria</taxon>
        <taxon>Euarchontoglires</taxon>
        <taxon>Glires</taxon>
        <taxon>Rodentia</taxon>
        <taxon>Myomorpha</taxon>
        <taxon>Muroidea</taxon>
        <taxon>Muridae</taxon>
        <taxon>Murinae</taxon>
        <taxon>Mus</taxon>
        <taxon>Mus</taxon>
    </lineage>
</organism>
<feature type="initiator methionine" description="Removed" evidence="1">
    <location>
        <position position="1"/>
    </location>
</feature>
<feature type="chain" id="PRO_0000143035" description="Porphobilinogen deaminase">
    <location>
        <begin position="2"/>
        <end position="361"/>
    </location>
</feature>
<feature type="modified residue" description="N-acetylserine" evidence="1">
    <location>
        <position position="2"/>
    </location>
</feature>
<feature type="modified residue" description="Phosphoserine" evidence="1">
    <location>
        <position position="69"/>
    </location>
</feature>
<feature type="modified residue" description="N6-acetyllysine" evidence="4">
    <location>
        <position position="74"/>
    </location>
</feature>
<feature type="modified residue" description="Phosphoserine" evidence="1">
    <location>
        <position position="147"/>
    </location>
</feature>
<feature type="modified residue" description="S-(dipyrrolylmethanemethyl)cysteine" evidence="1">
    <location>
        <position position="261"/>
    </location>
</feature>
<feature type="splice variant" id="VSP_002068" description="In isoform 2." evidence="3">
    <location>
        <begin position="1"/>
        <end position="17"/>
    </location>
</feature>
<feature type="sequence conflict" description="In Ref. 1; AAA39890/AAA39891." evidence="3" ref="1">
    <original>D</original>
    <variation>E</variation>
    <location>
        <position position="36"/>
    </location>
</feature>
<feature type="sequence conflict" description="In Ref. 1; AAA39890/AAA39891." evidence="3" ref="1">
    <original>L</original>
    <variation>V</variation>
    <location>
        <position position="64"/>
    </location>
</feature>
<feature type="sequence conflict" description="In Ref. 1; AAA39890/AAA39891." evidence="3" ref="1">
    <original>E</original>
    <variation>Q</variation>
    <location>
        <position position="117"/>
    </location>
</feature>
<feature type="sequence conflict" description="In Ref. 1; AAA39890/AAA39891." evidence="3" ref="1">
    <original>H</original>
    <variation>N</variation>
    <location>
        <position position="160"/>
    </location>
</feature>
<feature type="sequence conflict" description="In Ref. 1; AAA39890/AAA39891." evidence="3" ref="1">
    <original>M</original>
    <variation>I</variation>
    <location>
        <position position="271"/>
    </location>
</feature>
<accession>P22907</accession>
<accession>Q3TIV0</accession>
<comment type="function">
    <text evidence="1">As part of the heme biosynthetic pathway, catalyzes the sequential polymerization of four molecules of porphobilinogen to form hydroxymethylbilane, also known as preuroporphyrinogen. Catalysis begins with the assembly of the dipyrromethane cofactor by the apoenzyme from two molecules of porphobilinogen or from preuroporphyrinogen. The covalently linked cofactor acts as a primer, around which the tetrapyrrole product is assembled. In the last step of catalysis, the product, preuroporphyrinogen, is released, leaving the cofactor bound to the holodeaminase intact.</text>
</comment>
<comment type="catalytic activity">
    <reaction evidence="1">
        <text>4 porphobilinogen + H2O = hydroxymethylbilane + 4 NH4(+)</text>
        <dbReference type="Rhea" id="RHEA:13185"/>
        <dbReference type="ChEBI" id="CHEBI:15377"/>
        <dbReference type="ChEBI" id="CHEBI:28938"/>
        <dbReference type="ChEBI" id="CHEBI:57845"/>
        <dbReference type="ChEBI" id="CHEBI:58126"/>
        <dbReference type="EC" id="2.5.1.61"/>
    </reaction>
    <physiologicalReaction direction="left-to-right" evidence="1">
        <dbReference type="Rhea" id="RHEA:13186"/>
    </physiologicalReaction>
</comment>
<comment type="cofactor">
    <cofactor evidence="1">
        <name>dipyrromethane</name>
        <dbReference type="ChEBI" id="CHEBI:60342"/>
    </cofactor>
    <text evidence="1">Binds 1 dipyrromethane group covalently.</text>
</comment>
<comment type="pathway">
    <text evidence="1">Porphyrin-containing compound metabolism; protoporphyrin-IX biosynthesis; coproporphyrinogen-III from 5-aminolevulinate: step 2/4.</text>
</comment>
<comment type="subunit">
    <text evidence="1">Monomer.</text>
</comment>
<comment type="subcellular location">
    <subcellularLocation>
        <location evidence="2">Cytoplasm</location>
        <location evidence="2">Cytosol</location>
    </subcellularLocation>
</comment>
<comment type="alternative products">
    <event type="alternative splicing"/>
    <isoform>
        <id>P22907-1</id>
        <name>1</name>
        <name>Non-erythropoietic</name>
        <sequence type="displayed"/>
    </isoform>
    <isoform>
        <id>P22907-2</id>
        <name>2</name>
        <name>Erythrocyte</name>
        <sequence type="described" ref="VSP_002068"/>
    </isoform>
</comment>
<comment type="disruption phenotype">
    <text evidence="2">Mice display the typical biochemical characteristics of human acute intermittent porphyria, characterized by acute, life-threatening attacks of 'porphyric neuropathy' that include abdominal pain, motor and sensory neurological deficits.</text>
</comment>
<comment type="similarity">
    <text evidence="3">Belongs to the HMBS family.</text>
</comment>
<comment type="sequence caution" evidence="3">
    <conflict type="erroneous gene model prediction">
        <sequence resource="EMBL-CDS" id="AAA39890"/>
    </conflict>
</comment>
<keyword id="KW-0007">Acetylation</keyword>
<keyword id="KW-0025">Alternative splicing</keyword>
<keyword id="KW-0963">Cytoplasm</keyword>
<keyword id="KW-0350">Heme biosynthesis</keyword>
<keyword id="KW-0597">Phosphoprotein</keyword>
<keyword id="KW-0627">Porphyrin biosynthesis</keyword>
<keyword id="KW-1185">Reference proteome</keyword>
<keyword id="KW-0808">Transferase</keyword>
<protein>
    <recommendedName>
        <fullName evidence="3">Porphobilinogen deaminase</fullName>
        <shortName>PBG-D</shortName>
        <ecNumber evidence="1">2.5.1.61</ecNumber>
    </recommendedName>
    <alternativeName>
        <fullName>Hydroxymethylbilane synthase</fullName>
        <shortName>HMBS</shortName>
    </alternativeName>
    <alternativeName>
        <fullName>Pre-uroporphyrinogen synthase</fullName>
    </alternativeName>
</protein>